<gene>
    <name evidence="4" type="primary">phoH2</name>
    <name evidence="7" type="ordered locus">Tbis_3092</name>
</gene>
<protein>
    <recommendedName>
        <fullName evidence="4">Protein PhoH2</fullName>
        <ecNumber evidence="6">3.1.-.-</ecNumber>
        <ecNumber evidence="6">5.6.2.5</ecNumber>
    </recommendedName>
    <alternativeName>
        <fullName evidence="5">RNA 5'-3' helicase PhoH2</fullName>
    </alternativeName>
</protein>
<sequence>MAVSSSNPTQTRTYVLDTSVLLADPASMSRFAEHEVVIPIVVINELEAKRHHPELGYFAREALRFLDDLRVRHGRLDQPVPIGEGTIRVELNHSDPAVLPAGLRSGDNDSRILTVAQNLAAEGRDVVLVSKDLPMRLKAASLGLNAEEYRAGMVIESGWTGMAELQVTDDDLRMLFEHGTIELAEARDLPCHTGLRLLSTRGSALGRVTPDKSVRLVRGDREVFGLRGRSAEQRIALDLLMDPEIGIVSIGGRAGTGKSALALCAGLEAVLERRQHRKIIVFRPLYAVGGQELGYLPGTENDKMGPWAQAVYDTLGAVTSPEVIEEVLDRGMLEVLPLTHIRGRSLHDAFVIVDEAQSLERGVLLTVLSRIGSNSRVVLTHDVAQRDNLRVGRHDGVVAVVEKLKGHPLFAHITLTRSERSPIAALVTEMLQDITI</sequence>
<proteinExistence type="evidence at protein level"/>
<name>PHOH2_THEBD</name>
<reference evidence="7" key="1">
    <citation type="journal article" date="2010" name="Stand. Genomic Sci.">
        <title>Complete genome sequence of Thermobispora bispora type strain (R51).</title>
        <authorList>
            <person name="Liolios K."/>
            <person name="Sikorski J."/>
            <person name="Jando M."/>
            <person name="Lapidus A."/>
            <person name="Copeland A."/>
            <person name="Glavina del Rio T."/>
            <person name="Nolan M."/>
            <person name="Lucas S."/>
            <person name="Tice H."/>
            <person name="Cheng J.F."/>
            <person name="Han C."/>
            <person name="Woyke T."/>
            <person name="Goodwin L."/>
            <person name="Pitluck S."/>
            <person name="Ivanova N."/>
            <person name="Mavromatis K."/>
            <person name="Mikhailova N."/>
            <person name="Chertkov O."/>
            <person name="Kuske C."/>
            <person name="Chen A."/>
            <person name="Palaniappan K."/>
            <person name="Land M."/>
            <person name="Hauser L."/>
            <person name="Chang Y.J."/>
            <person name="Jeffries C.D."/>
            <person name="Detter J.C."/>
            <person name="Brettin T."/>
            <person name="Rohde M."/>
            <person name="Goeker M."/>
            <person name="Bristow J."/>
            <person name="Eisen J.A."/>
            <person name="Markowitz V."/>
            <person name="Hugenholtz P."/>
            <person name="Klenk H.P."/>
            <person name="Kyrpides N.C."/>
        </authorList>
    </citation>
    <scope>NUCLEOTIDE SEQUENCE [LARGE SCALE GENOMIC DNA]</scope>
    <source>
        <strain>ATCC 19993 / DSM 43833 / CBS 139.67 / JCM 10125 / KCTC 9307 / NBRC 14880 / R51</strain>
    </source>
</reference>
<reference key="2">
    <citation type="journal article" date="2015" name="Tuberculosis">
        <title>The mycobacterial PhoH2 proteins are type II toxin antitoxins coupled to RNA helicase domains.</title>
        <authorList>
            <person name="Andrews E.S."/>
            <person name="Arcus V.L."/>
        </authorList>
    </citation>
    <scope>IDENTIFICATION</scope>
    <scope>FUNCTION AS AN ATPASE</scope>
    <scope>BIOPHYSICOCHEMICAL PROPERTIES</scope>
    <scope>DOMAIN</scope>
    <scope>MUTAGENESIS OF ARG-283 AND ARG-342</scope>
    <source>
        <strain>ATCC 19993 / DSM 43833 / CBS 139.67 / JCM 10125 / KCTC 9307 / NBRC 14880 / R51</strain>
    </source>
</reference>
<comment type="function">
    <text evidence="1 3 6">Unwinds and/or cleaves 5'-tailed RNA in vitro, the reaction is maximal with hydrolyzable ATP; double-stranded (ds)RNA and dsDNA are not unwound (PubMed:25999286). Unlike the protein in mycobacteria there does not seem to be an antitoxin gene upstream, suggesting this is not a toxin-antitoxin system (Probable) (PubMed:25999286). Has ATPase and GTPase activities (By similarity).</text>
</comment>
<comment type="catalytic activity">
    <reaction evidence="6">
        <text>n ATP + n H2O + wound RNA = n ADP + n phosphate + unwound RNA.</text>
        <dbReference type="EC" id="5.6.2.5"/>
    </reaction>
</comment>
<comment type="catalytic activity">
    <reaction evidence="3">
        <text>ATP + H2O = ADP + phosphate + H(+)</text>
        <dbReference type="Rhea" id="RHEA:13065"/>
        <dbReference type="ChEBI" id="CHEBI:15377"/>
        <dbReference type="ChEBI" id="CHEBI:15378"/>
        <dbReference type="ChEBI" id="CHEBI:30616"/>
        <dbReference type="ChEBI" id="CHEBI:43474"/>
        <dbReference type="ChEBI" id="CHEBI:456216"/>
    </reaction>
</comment>
<comment type="catalytic activity">
    <reaction evidence="1">
        <text>GTP + H2O = GDP + phosphate + H(+)</text>
        <dbReference type="Rhea" id="RHEA:19669"/>
        <dbReference type="ChEBI" id="CHEBI:15377"/>
        <dbReference type="ChEBI" id="CHEBI:15378"/>
        <dbReference type="ChEBI" id="CHEBI:37565"/>
        <dbReference type="ChEBI" id="CHEBI:43474"/>
        <dbReference type="ChEBI" id="CHEBI:58189"/>
    </reaction>
</comment>
<comment type="biophysicochemical properties">
    <kinetics>
        <KM evidence="3">3.3 uM for ATP</KM>
    </kinetics>
</comment>
<comment type="domain">
    <text evidence="6">Has an N-terminal PINc domain and a C-terminal PhoH domain, suggesting it has RNase and nucleotide hydrolysis activities (PubMed:25999286).</text>
</comment>
<comment type="similarity">
    <text evidence="5">In the N-terminal section; belongs to the PINc/VapC protein family.</text>
</comment>
<comment type="similarity">
    <text evidence="5">In the C-terminal section; belongs to the PhoH family.</text>
</comment>
<feature type="chain" id="PRO_0000460848" description="Protein PhoH2">
    <location>
        <begin position="1"/>
        <end position="436"/>
    </location>
</feature>
<feature type="domain" description="PINc" evidence="2">
    <location>
        <begin position="12"/>
        <end position="137"/>
    </location>
</feature>
<feature type="mutagenesis site" description="No longer unwinds or cleaves 5'-tailed RNA, decreased ATPase activity." evidence="3">
    <original>R</original>
    <variation>A</variation>
    <location>
        <position position="283"/>
    </location>
</feature>
<feature type="mutagenesis site" description="No longer unwinds or cleaves 5'-tailed RNA, decreased ATPase activity." evidence="3">
    <original>R</original>
    <variation>A</variation>
    <location>
        <position position="342"/>
    </location>
</feature>
<keyword id="KW-0067">ATP-binding</keyword>
<keyword id="KW-0342">GTP-binding</keyword>
<keyword id="KW-0378">Hydrolase</keyword>
<keyword id="KW-0413">Isomerase</keyword>
<keyword id="KW-0460">Magnesium</keyword>
<keyword id="KW-0479">Metal-binding</keyword>
<keyword id="KW-0540">Nuclease</keyword>
<keyword id="KW-0547">Nucleotide-binding</keyword>
<keyword id="KW-1185">Reference proteome</keyword>
<dbReference type="EC" id="3.1.-.-" evidence="6"/>
<dbReference type="EC" id="5.6.2.5" evidence="6"/>
<dbReference type="EMBL" id="CP001874">
    <property type="protein sequence ID" value="ADG89787.1"/>
    <property type="molecule type" value="Genomic_DNA"/>
</dbReference>
<dbReference type="SMR" id="D6Y851"/>
<dbReference type="STRING" id="469371.Tbis_3092"/>
<dbReference type="KEGG" id="tbi:Tbis_3092"/>
<dbReference type="eggNOG" id="COG1875">
    <property type="taxonomic scope" value="Bacteria"/>
</dbReference>
<dbReference type="HOGENOM" id="CLU_022283_2_1_11"/>
<dbReference type="Proteomes" id="UP000006640">
    <property type="component" value="Chromosome"/>
</dbReference>
<dbReference type="GO" id="GO:0005829">
    <property type="term" value="C:cytosol"/>
    <property type="evidence" value="ECO:0007669"/>
    <property type="project" value="TreeGrafter"/>
</dbReference>
<dbReference type="GO" id="GO:0005524">
    <property type="term" value="F:ATP binding"/>
    <property type="evidence" value="ECO:0007669"/>
    <property type="project" value="UniProtKB-KW"/>
</dbReference>
<dbReference type="GO" id="GO:0005525">
    <property type="term" value="F:GTP binding"/>
    <property type="evidence" value="ECO:0007669"/>
    <property type="project" value="UniProtKB-KW"/>
</dbReference>
<dbReference type="GO" id="GO:0016853">
    <property type="term" value="F:isomerase activity"/>
    <property type="evidence" value="ECO:0007669"/>
    <property type="project" value="UniProtKB-KW"/>
</dbReference>
<dbReference type="GO" id="GO:0046872">
    <property type="term" value="F:metal ion binding"/>
    <property type="evidence" value="ECO:0007669"/>
    <property type="project" value="UniProtKB-KW"/>
</dbReference>
<dbReference type="GO" id="GO:0004518">
    <property type="term" value="F:nuclease activity"/>
    <property type="evidence" value="ECO:0007669"/>
    <property type="project" value="UniProtKB-KW"/>
</dbReference>
<dbReference type="CDD" id="cd09883">
    <property type="entry name" value="PIN_VapC_PhoHL-ATPase"/>
    <property type="match status" value="1"/>
</dbReference>
<dbReference type="FunFam" id="3.40.50.300:FF:000215">
    <property type="entry name" value="ATP-binding protein"/>
    <property type="match status" value="1"/>
</dbReference>
<dbReference type="Gene3D" id="3.40.50.1010">
    <property type="entry name" value="5'-nuclease"/>
    <property type="match status" value="1"/>
</dbReference>
<dbReference type="Gene3D" id="3.40.50.300">
    <property type="entry name" value="P-loop containing nucleotide triphosphate hydrolases"/>
    <property type="match status" value="1"/>
</dbReference>
<dbReference type="InterPro" id="IPR027417">
    <property type="entry name" value="P-loop_NTPase"/>
</dbReference>
<dbReference type="InterPro" id="IPR003714">
    <property type="entry name" value="PhoH"/>
</dbReference>
<dbReference type="InterPro" id="IPR051451">
    <property type="entry name" value="PhoH2-like"/>
</dbReference>
<dbReference type="InterPro" id="IPR029060">
    <property type="entry name" value="PIN-like_dom_sf"/>
</dbReference>
<dbReference type="InterPro" id="IPR002716">
    <property type="entry name" value="PIN_dom"/>
</dbReference>
<dbReference type="PANTHER" id="PTHR30473:SF2">
    <property type="entry name" value="PIN DOMAIN-CONTAINING PROTEIN"/>
    <property type="match status" value="1"/>
</dbReference>
<dbReference type="PANTHER" id="PTHR30473">
    <property type="entry name" value="PROTEIN PHOH"/>
    <property type="match status" value="1"/>
</dbReference>
<dbReference type="Pfam" id="PF02562">
    <property type="entry name" value="PhoH"/>
    <property type="match status" value="1"/>
</dbReference>
<dbReference type="Pfam" id="PF13638">
    <property type="entry name" value="PIN_4"/>
    <property type="match status" value="1"/>
</dbReference>
<dbReference type="SMART" id="SM00670">
    <property type="entry name" value="PINc"/>
    <property type="match status" value="1"/>
</dbReference>
<dbReference type="SUPFAM" id="SSF52540">
    <property type="entry name" value="P-loop containing nucleoside triphosphate hydrolases"/>
    <property type="match status" value="1"/>
</dbReference>
<dbReference type="SUPFAM" id="SSF88723">
    <property type="entry name" value="PIN domain-like"/>
    <property type="match status" value="1"/>
</dbReference>
<accession>D6Y851</accession>
<evidence type="ECO:0000250" key="1">
    <source>
        <dbReference type="UniProtKB" id="O53443"/>
    </source>
</evidence>
<evidence type="ECO:0000255" key="2"/>
<evidence type="ECO:0000269" key="3">
    <source>
    </source>
</evidence>
<evidence type="ECO:0000303" key="4">
    <source>
    </source>
</evidence>
<evidence type="ECO:0000305" key="5"/>
<evidence type="ECO:0000305" key="6">
    <source>
    </source>
</evidence>
<evidence type="ECO:0000312" key="7">
    <source>
        <dbReference type="EMBL" id="ADG89787.1"/>
    </source>
</evidence>
<organism>
    <name type="scientific">Thermobispora bispora (strain ATCC 19993 / DSM 43833 / CBS 139.67 / JCM 10125 / KCTC 9307 / NBRC 14880 / R51)</name>
    <dbReference type="NCBI Taxonomy" id="469371"/>
    <lineage>
        <taxon>Bacteria</taxon>
        <taxon>Bacillati</taxon>
        <taxon>Actinomycetota</taxon>
        <taxon>Actinomycetes</taxon>
        <taxon>Streptosporangiales</taxon>
        <taxon>Streptosporangiaceae</taxon>
        <taxon>Thermobispora</taxon>
    </lineage>
</organism>